<name>KCTD7_HUMAN</name>
<comment type="function">
    <text evidence="1">May be involved in the control of excitability of cortical neurons.</text>
</comment>
<comment type="subunit">
    <text evidence="8">Interacts with CUL3.</text>
</comment>
<comment type="interaction">
    <interactant intactId="EBI-11954971">
        <id>Q96MP8-2</id>
    </interactant>
    <interactant intactId="EBI-10173507">
        <id>Q6UY14-3</id>
        <label>ADAMTSL4</label>
    </interactant>
    <organismsDiffer>false</organismsDiffer>
    <experiments>3</experiments>
</comment>
<comment type="interaction">
    <interactant intactId="EBI-11954971">
        <id>Q96MP8-2</id>
    </interactant>
    <interactant intactId="EBI-2949658">
        <id>O95429</id>
        <label>BAG4</label>
    </interactant>
    <organismsDiffer>false</organismsDiffer>
    <experiments>3</experiments>
</comment>
<comment type="interaction">
    <interactant intactId="EBI-11954971">
        <id>Q96MP8-2</id>
    </interactant>
    <interactant intactId="EBI-456129">
        <id>Q13618</id>
        <label>CUL3</label>
    </interactant>
    <organismsDiffer>false</organismsDiffer>
    <experiments>4</experiments>
</comment>
<comment type="interaction">
    <interactant intactId="EBI-11954971">
        <id>Q96MP8-2</id>
    </interactant>
    <interactant intactId="EBI-739789">
        <id>Q92997</id>
        <label>DVL3</label>
    </interactant>
    <organismsDiffer>false</organismsDiffer>
    <experiments>3</experiments>
</comment>
<comment type="interaction">
    <interactant intactId="EBI-11954971">
        <id>Q96MP8-2</id>
    </interactant>
    <interactant intactId="EBI-2349927">
        <id>Q5JST6</id>
        <label>EFHC2</label>
    </interactant>
    <organismsDiffer>false</organismsDiffer>
    <experiments>3</experiments>
</comment>
<comment type="interaction">
    <interactant intactId="EBI-11954971">
        <id>Q96MP8-2</id>
    </interactant>
    <interactant intactId="EBI-7960826">
        <id>Q8NHY3</id>
        <label>GAS2L2</label>
    </interactant>
    <organismsDiffer>false</organismsDiffer>
    <experiments>3</experiments>
</comment>
<comment type="interaction">
    <interactant intactId="EBI-11954971">
        <id>Q96MP8-2</id>
    </interactant>
    <interactant intactId="EBI-739467">
        <id>Q9H8Y8</id>
        <label>GORASP2</label>
    </interactant>
    <organismsDiffer>false</organismsDiffer>
    <experiments>5</experiments>
</comment>
<comment type="interaction">
    <interactant intactId="EBI-11954971">
        <id>Q96MP8-2</id>
    </interactant>
    <interactant intactId="EBI-6509505">
        <id>Q0VD86</id>
        <label>INCA1</label>
    </interactant>
    <organismsDiffer>false</organismsDiffer>
    <experiments>3</experiments>
</comment>
<comment type="interaction">
    <interactant intactId="EBI-11954971">
        <id>Q96MP8-2</id>
    </interactant>
    <interactant intactId="EBI-715611">
        <id>Q9C086</id>
        <label>INO80B</label>
    </interactant>
    <organismsDiffer>false</organismsDiffer>
    <experiments>3</experiments>
</comment>
<comment type="interaction">
    <interactant intactId="EBI-11954971">
        <id>Q96MP8-2</id>
    </interactant>
    <interactant intactId="EBI-399080">
        <id>Q92993</id>
        <label>KAT5</label>
    </interactant>
    <organismsDiffer>false</organismsDiffer>
    <experiments>3</experiments>
</comment>
<comment type="interaction">
    <interactant intactId="EBI-11954971">
        <id>Q96MP8-2</id>
    </interactant>
    <interactant intactId="EBI-11954971">
        <id>Q96MP8-2</id>
        <label>KCTD7</label>
    </interactant>
    <organismsDiffer>false</organismsDiffer>
    <experiments>5</experiments>
</comment>
<comment type="interaction">
    <interactant intactId="EBI-11954971">
        <id>Q96MP8-2</id>
    </interactant>
    <interactant intactId="EBI-2949715">
        <id>O95678</id>
        <label>KRT75</label>
    </interactant>
    <organismsDiffer>false</organismsDiffer>
    <experiments>3</experiments>
</comment>
<comment type="interaction">
    <interactant intactId="EBI-11954971">
        <id>Q96MP8-2</id>
    </interactant>
    <interactant intactId="EBI-10241252">
        <id>Q3SY46</id>
        <label>KRTAP13-3</label>
    </interactant>
    <organismsDiffer>false</organismsDiffer>
    <experiments>3</experiments>
</comment>
<comment type="interaction">
    <interactant intactId="EBI-11954971">
        <id>Q96MP8-2</id>
    </interactant>
    <interactant intactId="EBI-739832">
        <id>Q8TBB1</id>
        <label>LNX1</label>
    </interactant>
    <organismsDiffer>false</organismsDiffer>
    <experiments>3</experiments>
</comment>
<comment type="interaction">
    <interactant intactId="EBI-11954971">
        <id>Q96MP8-2</id>
    </interactant>
    <interactant intactId="EBI-724076">
        <id>Q99750</id>
        <label>MDFI</label>
    </interactant>
    <organismsDiffer>false</organismsDiffer>
    <experiments>3</experiments>
</comment>
<comment type="interaction">
    <interactant intactId="EBI-11954971">
        <id>Q96MP8-2</id>
    </interactant>
    <interactant intactId="EBI-2864512">
        <id>P50221</id>
        <label>MEOX1</label>
    </interactant>
    <organismsDiffer>false</organismsDiffer>
    <experiments>3</experiments>
</comment>
<comment type="interaction">
    <interactant intactId="EBI-11954971">
        <id>Q96MP8-2</id>
    </interactant>
    <interactant intactId="EBI-16439278">
        <id>Q6FHY5</id>
        <label>MEOX2</label>
    </interactant>
    <organismsDiffer>false</organismsDiffer>
    <experiments>3</experiments>
</comment>
<comment type="interaction">
    <interactant intactId="EBI-11954971">
        <id>Q96MP8-2</id>
    </interactant>
    <interactant intactId="EBI-740897">
        <id>Q9GZT8</id>
        <label>NIF3L1</label>
    </interactant>
    <organismsDiffer>false</organismsDiffer>
    <experiments>3</experiments>
</comment>
<comment type="interaction">
    <interactant intactId="EBI-11954971">
        <id>Q96MP8-2</id>
    </interactant>
    <interactant intactId="EBI-741158">
        <id>Q96HA8</id>
        <label>NTAQ1</label>
    </interactant>
    <organismsDiffer>false</organismsDiffer>
    <experiments>3</experiments>
</comment>
<comment type="interaction">
    <interactant intactId="EBI-11954971">
        <id>Q96MP8-2</id>
    </interactant>
    <interactant intactId="EBI-398874">
        <id>Q9UBU9</id>
        <label>NXF1</label>
    </interactant>
    <organismsDiffer>false</organismsDiffer>
    <experiments>3</experiments>
</comment>
<comment type="interaction">
    <interactant intactId="EBI-11954971">
        <id>Q96MP8-2</id>
    </interactant>
    <interactant intactId="EBI-3921217">
        <id>Q9HBI0</id>
        <label>PARVG</label>
    </interactant>
    <organismsDiffer>false</organismsDiffer>
    <experiments>3</experiments>
</comment>
<comment type="interaction">
    <interactant intactId="EBI-11954971">
        <id>Q96MP8-2</id>
    </interactant>
    <interactant intactId="EBI-747278">
        <id>P26367</id>
        <label>PAX6</label>
    </interactant>
    <organismsDiffer>false</organismsDiffer>
    <experiments>3</experiments>
</comment>
<comment type="interaction">
    <interactant intactId="EBI-11954971">
        <id>Q96MP8-2</id>
    </interactant>
    <interactant intactId="EBI-714158">
        <id>Q13526</id>
        <label>PIN1</label>
    </interactant>
    <organismsDiffer>false</organismsDiffer>
    <experiments>3</experiments>
</comment>
<comment type="interaction">
    <interactant intactId="EBI-11954971">
        <id>Q96MP8-2</id>
    </interactant>
    <interactant intactId="EBI-2798416">
        <id>Q99633</id>
        <label>PRPF18</label>
    </interactant>
    <organismsDiffer>false</organismsDiffer>
    <experiments>3</experiments>
</comment>
<comment type="interaction">
    <interactant intactId="EBI-11954971">
        <id>Q96MP8-2</id>
    </interactant>
    <interactant intactId="EBI-359352">
        <id>P25786</id>
        <label>PSMA1</label>
    </interactant>
    <organismsDiffer>false</organismsDiffer>
    <experiments>3</experiments>
</comment>
<comment type="interaction">
    <interactant intactId="EBI-11954971">
        <id>Q96MP8-2</id>
    </interactant>
    <interactant intactId="EBI-722284">
        <id>P20338</id>
        <label>RAB4A</label>
    </interactant>
    <organismsDiffer>false</organismsDiffer>
    <experiments>3</experiments>
</comment>
<comment type="interaction">
    <interactant intactId="EBI-11954971">
        <id>Q96MP8-2</id>
    </interactant>
    <interactant intactId="EBI-10829018">
        <id>Q04864-2</id>
        <label>REL</label>
    </interactant>
    <organismsDiffer>false</organismsDiffer>
    <experiments>3</experiments>
</comment>
<comment type="interaction">
    <interactant intactId="EBI-11954971">
        <id>Q96MP8-2</id>
    </interactant>
    <interactant intactId="EBI-710310">
        <id>Q15560</id>
        <label>TCEA2</label>
    </interactant>
    <organismsDiffer>false</organismsDiffer>
    <experiments>3</experiments>
</comment>
<comment type="interaction">
    <interactant intactId="EBI-11954971">
        <id>Q96MP8-2</id>
    </interactant>
    <interactant intactId="EBI-11955057">
        <id>Q8N8B7-2</id>
        <label>TCEANC</label>
    </interactant>
    <organismsDiffer>false</organismsDiffer>
    <experiments>3</experiments>
</comment>
<comment type="interaction">
    <interactant intactId="EBI-11954971">
        <id>Q96MP8-2</id>
    </interactant>
    <interactant intactId="EBI-711018">
        <id>P54274-2</id>
        <label>TERF1</label>
    </interactant>
    <organismsDiffer>false</organismsDiffer>
    <experiments>7</experiments>
</comment>
<comment type="interaction">
    <interactant intactId="EBI-11954971">
        <id>Q96MP8-2</id>
    </interactant>
    <interactant intactId="EBI-749840">
        <id>Q9C040</id>
        <label>TRIM2</label>
    </interactant>
    <organismsDiffer>false</organismsDiffer>
    <experiments>3</experiments>
</comment>
<comment type="interaction">
    <interactant intactId="EBI-11954971">
        <id>Q96MP8-2</id>
    </interactant>
    <interactant intactId="EBI-2129889">
        <id>O75382</id>
        <label>TRIM3</label>
    </interactant>
    <organismsDiffer>false</organismsDiffer>
    <experiments>3</experiments>
</comment>
<comment type="interaction">
    <interactant intactId="EBI-11954971">
        <id>Q96MP8-2</id>
    </interactant>
    <interactant intactId="EBI-11980193">
        <id>Q14119</id>
        <label>VEZF1</label>
    </interactant>
    <organismsDiffer>false</organismsDiffer>
    <experiments>3</experiments>
</comment>
<comment type="interaction">
    <interactant intactId="EBI-11954971">
        <id>Q96MP8-2</id>
    </interactant>
    <interactant intactId="EBI-740727">
        <id>Q8TAU3</id>
        <label>ZNF417</label>
    </interactant>
    <organismsDiffer>false</organismsDiffer>
    <experiments>3</experiments>
</comment>
<comment type="interaction">
    <interactant intactId="EBI-11954971">
        <id>Q96MP8-2</id>
    </interactant>
    <interactant intactId="EBI-11962468">
        <id>Q7Z4V0</id>
        <label>ZNF438</label>
    </interactant>
    <organismsDiffer>false</organismsDiffer>
    <experiments>3</experiments>
</comment>
<comment type="interaction">
    <interactant intactId="EBI-11954971">
        <id>Q96MP8-2</id>
    </interactant>
    <interactant intactId="EBI-17269964">
        <id>Q6S9Z5</id>
        <label>ZNF474</label>
    </interactant>
    <organismsDiffer>false</organismsDiffer>
    <experiments>3</experiments>
</comment>
<comment type="interaction">
    <interactant intactId="EBI-11954971">
        <id>Q96MP8-2</id>
    </interactant>
    <interactant intactId="EBI-2555731">
        <id>Q9H707</id>
        <label>ZNF552</label>
    </interactant>
    <organismsDiffer>false</organismsDiffer>
    <experiments>3</experiments>
</comment>
<comment type="interaction">
    <interactant intactId="EBI-11954971">
        <id>Q96MP8-2</id>
    </interactant>
    <interactant intactId="EBI-6427977">
        <id>Q96SQ5</id>
        <label>ZNF587</label>
    </interactant>
    <organismsDiffer>false</organismsDiffer>
    <experiments>3</experiments>
</comment>
<comment type="subcellular location">
    <subcellularLocation>
        <location>Cell membrane</location>
    </subcellularLocation>
    <subcellularLocation>
        <location>Cytoplasm</location>
        <location>Cytosol</location>
    </subcellularLocation>
</comment>
<comment type="alternative products">
    <event type="alternative splicing"/>
    <isoform>
        <id>Q96MP8-1</id>
        <name>1</name>
        <sequence type="displayed"/>
    </isoform>
    <isoform>
        <id>Q96MP8-2</id>
        <name>2</name>
        <sequence type="described" ref="VSP_020760"/>
    </isoform>
</comment>
<comment type="disease" evidence="3 4 5 7 8">
    <disease id="DI-00955">
        <name>Epilepsy, progressive myoclonic 3, with or without intracellular inclusions</name>
        <acronym>EPM3</acronym>
        <description>A form of progressive myoclonic epilepsy, a clinically and genetically heterogeneous group of disorders defined by the combination of action and reflex myoclonus, other types of epileptic seizures, and progressive neurodegeneration and neurocognitive impairment. EPM3 is an autosomal recessive, severe, form with early onset. Multifocal myoclonic seizures begin between 16 and 24 months of age after normal initial development. Neurodegeneration and regression occur with seizure onset. Other features include intellectual disability, dysarthria, truncal ataxia, and loss of fine finger movements. EEG shows slow dysrhythmia, multifocal and occasionally generalized epileptiform discharges. In some patients, ultrastructural findings on skin biopsies identify intracellular accumulation of autofluorescent lipopigment storage material, consistent with neuronal ceroid lipofuscinosis.</description>
        <dbReference type="MIM" id="611726"/>
    </disease>
    <text>The disease is caused by variants affecting the gene represented in this entry.</text>
</comment>
<comment type="disease">
    <text evidence="6">Defects in KCTD7 are a cause of opsoclonus-myoclonus ataxia-like syndrome. Opsoclonus myoclonus ataxia syndrome (OMS) is a rare pervasive and frequently permanent disorder that usually develops in previously healthy children with normal premorbid psychomotor development and characterized by association of abnormal eye movements (opsoclonus), severe dyskinesia (myoclonus), cerebellar ataxia, functional regression, and behavioral problems. The syndrome is considered to be an immune-mediated disorder and may be tumor-associated or idiopathic. OMS is one of a few steroid responsive disorders of childhood. KCTD7 mutations have been found in a patient with an atypical clinical presentation characterized by non-epileptic myoclonus and ataxia commencing in early infancy, abnormal opsoclonus-like eye movements, improvement of clinical symptoms under steroid treatment, and subsequent development of generalized epilepsy (PubMed:22638565).</text>
</comment>
<keyword id="KW-0025">Alternative splicing</keyword>
<keyword id="KW-1003">Cell membrane</keyword>
<keyword id="KW-0963">Cytoplasm</keyword>
<keyword id="KW-0225">Disease variant</keyword>
<keyword id="KW-0887">Epilepsy</keyword>
<keyword id="KW-0472">Membrane</keyword>
<keyword id="KW-0523">Neurodegeneration</keyword>
<keyword id="KW-0525">Neuronal ceroid lipofuscinosis</keyword>
<keyword id="KW-1267">Proteomics identification</keyword>
<keyword id="KW-1185">Reference proteome</keyword>
<organism>
    <name type="scientific">Homo sapiens</name>
    <name type="common">Human</name>
    <dbReference type="NCBI Taxonomy" id="9606"/>
    <lineage>
        <taxon>Eukaryota</taxon>
        <taxon>Metazoa</taxon>
        <taxon>Chordata</taxon>
        <taxon>Craniata</taxon>
        <taxon>Vertebrata</taxon>
        <taxon>Euteleostomi</taxon>
        <taxon>Mammalia</taxon>
        <taxon>Eutheria</taxon>
        <taxon>Euarchontoglires</taxon>
        <taxon>Primates</taxon>
        <taxon>Haplorrhini</taxon>
        <taxon>Catarrhini</taxon>
        <taxon>Hominidae</taxon>
        <taxon>Homo</taxon>
    </lineage>
</organism>
<proteinExistence type="evidence at protein level"/>
<gene>
    <name type="primary">KCTD7</name>
</gene>
<dbReference type="EMBL" id="AK056631">
    <property type="protein sequence ID" value="BAB71236.1"/>
    <property type="molecule type" value="mRNA"/>
</dbReference>
<dbReference type="EMBL" id="CH236961">
    <property type="protein sequence ID" value="EAL23735.1"/>
    <property type="molecule type" value="Genomic_DNA"/>
</dbReference>
<dbReference type="EMBL" id="CH471140">
    <property type="protein sequence ID" value="EAX07919.1"/>
    <property type="molecule type" value="Genomic_DNA"/>
</dbReference>
<dbReference type="EMBL" id="BC042482">
    <property type="protein sequence ID" value="AAH42482.1"/>
    <property type="molecule type" value="mRNA"/>
</dbReference>
<dbReference type="CCDS" id="CCDS55117.1">
    <molecule id="Q96MP8-2"/>
</dbReference>
<dbReference type="CCDS" id="CCDS5534.1">
    <molecule id="Q96MP8-1"/>
</dbReference>
<dbReference type="RefSeq" id="NP_001161433.1">
    <molecule id="Q96MP8-2"/>
    <property type="nucleotide sequence ID" value="NM_001167961.2"/>
</dbReference>
<dbReference type="RefSeq" id="NP_694578.1">
    <molecule id="Q96MP8-1"/>
    <property type="nucleotide sequence ID" value="NM_153033.5"/>
</dbReference>
<dbReference type="SMR" id="Q96MP8"/>
<dbReference type="BioGRID" id="127564">
    <property type="interactions" value="84"/>
</dbReference>
<dbReference type="FunCoup" id="Q96MP8">
    <property type="interactions" value="791"/>
</dbReference>
<dbReference type="IntAct" id="Q96MP8">
    <property type="interactions" value="41"/>
</dbReference>
<dbReference type="STRING" id="9606.ENSP00000492240"/>
<dbReference type="iPTMnet" id="Q96MP8"/>
<dbReference type="PhosphoSitePlus" id="Q96MP8"/>
<dbReference type="BioMuta" id="KCTD7"/>
<dbReference type="DMDM" id="74732414"/>
<dbReference type="jPOST" id="Q96MP8"/>
<dbReference type="MassIVE" id="Q96MP8"/>
<dbReference type="PaxDb" id="9606-ENSP00000275532"/>
<dbReference type="PeptideAtlas" id="Q96MP8"/>
<dbReference type="ProteomicsDB" id="77385">
    <molecule id="Q96MP8-1"/>
</dbReference>
<dbReference type="ProteomicsDB" id="77386">
    <molecule id="Q96MP8-2"/>
</dbReference>
<dbReference type="Pumba" id="Q96MP8"/>
<dbReference type="Antibodypedia" id="34857">
    <property type="antibodies" value="121 antibodies from 19 providers"/>
</dbReference>
<dbReference type="DNASU" id="154881"/>
<dbReference type="Ensembl" id="ENST00000443322.1">
    <molecule id="Q96MP8-2"/>
    <property type="protein sequence ID" value="ENSP00000411624.1"/>
    <property type="gene ID" value="ENSG00000243335.10"/>
</dbReference>
<dbReference type="Ensembl" id="ENST00000639828.2">
    <molecule id="Q96MP8-1"/>
    <property type="protein sequence ID" value="ENSP00000492240.1"/>
    <property type="gene ID" value="ENSG00000243335.10"/>
</dbReference>
<dbReference type="GeneID" id="154881"/>
<dbReference type="KEGG" id="hsa:154881"/>
<dbReference type="MANE-Select" id="ENST00000639828.2">
    <property type="protein sequence ID" value="ENSP00000492240.1"/>
    <property type="RefSeq nucleotide sequence ID" value="NM_153033.5"/>
    <property type="RefSeq protein sequence ID" value="NP_694578.1"/>
</dbReference>
<dbReference type="UCSC" id="uc003tvd.5">
    <molecule id="Q96MP8-1"/>
    <property type="organism name" value="human"/>
</dbReference>
<dbReference type="AGR" id="HGNC:21957"/>
<dbReference type="CTD" id="154881"/>
<dbReference type="DisGeNET" id="154881"/>
<dbReference type="GeneCards" id="KCTD7"/>
<dbReference type="HGNC" id="HGNC:21957">
    <property type="gene designation" value="KCTD7"/>
</dbReference>
<dbReference type="HPA" id="ENSG00000243335">
    <property type="expression patterns" value="Tissue enhanced (retina)"/>
</dbReference>
<dbReference type="MalaCards" id="KCTD7"/>
<dbReference type="MIM" id="611725">
    <property type="type" value="gene"/>
</dbReference>
<dbReference type="MIM" id="611726">
    <property type="type" value="phenotype"/>
</dbReference>
<dbReference type="neXtProt" id="NX_Q96MP8"/>
<dbReference type="OpenTargets" id="ENSG00000243335"/>
<dbReference type="Orphanet" id="263516">
    <property type="disease" value="Progressive myoclonic epilepsy type 3"/>
</dbReference>
<dbReference type="PharmGKB" id="PA134884591"/>
<dbReference type="VEuPathDB" id="HostDB:ENSG00000243335"/>
<dbReference type="eggNOG" id="KOG2723">
    <property type="taxonomic scope" value="Eukaryota"/>
</dbReference>
<dbReference type="GeneTree" id="ENSGT00940000161327"/>
<dbReference type="HOGENOM" id="CLU_070345_1_0_1"/>
<dbReference type="InParanoid" id="Q96MP8"/>
<dbReference type="OMA" id="IAAEQQC"/>
<dbReference type="OrthoDB" id="2414723at2759"/>
<dbReference type="PAN-GO" id="Q96MP8">
    <property type="GO annotations" value="3 GO annotations based on evolutionary models"/>
</dbReference>
<dbReference type="PathwayCommons" id="Q96MP8"/>
<dbReference type="Reactome" id="R-HSA-8951664">
    <property type="pathway name" value="Neddylation"/>
</dbReference>
<dbReference type="Reactome" id="R-HSA-983168">
    <property type="pathway name" value="Antigen processing: Ubiquitination &amp; Proteasome degradation"/>
</dbReference>
<dbReference type="SignaLink" id="Q96MP8"/>
<dbReference type="BioGRID-ORCS" id="154881">
    <property type="hits" value="11 hits in 1155 CRISPR screens"/>
</dbReference>
<dbReference type="ChiTaRS" id="KCTD7">
    <property type="organism name" value="human"/>
</dbReference>
<dbReference type="GeneWiki" id="KCTD7"/>
<dbReference type="GenomeRNAi" id="154881"/>
<dbReference type="Pharos" id="Q96MP8">
    <property type="development level" value="Tbio"/>
</dbReference>
<dbReference type="PRO" id="PR:Q96MP8"/>
<dbReference type="Proteomes" id="UP000005640">
    <property type="component" value="Chromosome 7"/>
</dbReference>
<dbReference type="RNAct" id="Q96MP8">
    <property type="molecule type" value="protein"/>
</dbReference>
<dbReference type="Bgee" id="ENSG00000243335">
    <property type="expression patterns" value="Expressed in cortical plate and 178 other cell types or tissues"/>
</dbReference>
<dbReference type="ExpressionAtlas" id="Q96MP8">
    <property type="expression patterns" value="baseline and differential"/>
</dbReference>
<dbReference type="GO" id="GO:0005737">
    <property type="term" value="C:cytoplasm"/>
    <property type="evidence" value="ECO:0000314"/>
    <property type="project" value="UniProtKB"/>
</dbReference>
<dbReference type="GO" id="GO:0005829">
    <property type="term" value="C:cytosol"/>
    <property type="evidence" value="ECO:0000304"/>
    <property type="project" value="Reactome"/>
</dbReference>
<dbReference type="GO" id="GO:0005886">
    <property type="term" value="C:plasma membrane"/>
    <property type="evidence" value="ECO:0000314"/>
    <property type="project" value="UniProtKB"/>
</dbReference>
<dbReference type="GO" id="GO:0042802">
    <property type="term" value="F:identical protein binding"/>
    <property type="evidence" value="ECO:0000353"/>
    <property type="project" value="IntAct"/>
</dbReference>
<dbReference type="GO" id="GO:0090461">
    <property type="term" value="P:intracellular glutamate homeostasis"/>
    <property type="evidence" value="ECO:0000315"/>
    <property type="project" value="UniProtKB"/>
</dbReference>
<dbReference type="GO" id="GO:0030007">
    <property type="term" value="P:intracellular potassium ion homeostasis"/>
    <property type="evidence" value="ECO:0007669"/>
    <property type="project" value="Ensembl"/>
</dbReference>
<dbReference type="GO" id="GO:0060081">
    <property type="term" value="P:membrane hyperpolarization"/>
    <property type="evidence" value="ECO:0000318"/>
    <property type="project" value="GO_Central"/>
</dbReference>
<dbReference type="GO" id="GO:0051260">
    <property type="term" value="P:protein homooligomerization"/>
    <property type="evidence" value="ECO:0007669"/>
    <property type="project" value="InterPro"/>
</dbReference>
<dbReference type="CDD" id="cd18366">
    <property type="entry name" value="BTB_POZ_KCTD7"/>
    <property type="match status" value="1"/>
</dbReference>
<dbReference type="FunFam" id="3.30.710.10:FF:000046">
    <property type="entry name" value="BTB/POZ domain-containing protein KCTD7 isoform X1"/>
    <property type="match status" value="1"/>
</dbReference>
<dbReference type="Gene3D" id="3.30.710.10">
    <property type="entry name" value="Potassium Channel Kv1.1, Chain A"/>
    <property type="match status" value="1"/>
</dbReference>
<dbReference type="InterPro" id="IPR000210">
    <property type="entry name" value="BTB/POZ_dom"/>
</dbReference>
<dbReference type="InterPro" id="IPR011333">
    <property type="entry name" value="SKP1/BTB/POZ_sf"/>
</dbReference>
<dbReference type="InterPro" id="IPR003131">
    <property type="entry name" value="T1-type_BTB"/>
</dbReference>
<dbReference type="PANTHER" id="PTHR14499:SF122">
    <property type="entry name" value="BTB_POZ DOMAIN-CONTAINING PROTEIN KCTD7"/>
    <property type="match status" value="1"/>
</dbReference>
<dbReference type="PANTHER" id="PTHR14499">
    <property type="entry name" value="POTASSIUM CHANNEL TETRAMERIZATION DOMAIN-CONTAINING"/>
    <property type="match status" value="1"/>
</dbReference>
<dbReference type="Pfam" id="PF02214">
    <property type="entry name" value="BTB_2"/>
    <property type="match status" value="1"/>
</dbReference>
<dbReference type="SMART" id="SM00225">
    <property type="entry name" value="BTB"/>
    <property type="match status" value="1"/>
</dbReference>
<dbReference type="SUPFAM" id="SSF54695">
    <property type="entry name" value="POZ domain"/>
    <property type="match status" value="1"/>
</dbReference>
<accession>Q96MP8</accession>
<accession>A4D2M4</accession>
<accession>Q8IVR0</accession>
<feature type="chain" id="PRO_0000251476" description="BTB/POZ domain-containing protein KCTD7">
    <location>
        <begin position="1"/>
        <end position="289"/>
    </location>
</feature>
<feature type="domain" description="BTB">
    <location>
        <begin position="51"/>
        <end position="149"/>
    </location>
</feature>
<feature type="region of interest" description="Disordered" evidence="2">
    <location>
        <begin position="1"/>
        <end position="35"/>
    </location>
</feature>
<feature type="splice variant" id="VSP_020760" description="In isoform 2." evidence="9">
    <location>
        <position position="289"/>
    </location>
</feature>
<feature type="sequence variant" id="VAR_068775" description="Found in a patient with opsoclonus-myoclonus ataxia-like syndrome; likely pathogenic; dbSNP:rs754476100." evidence="6">
    <original>R</original>
    <variation>W</variation>
    <location>
        <position position="84"/>
    </location>
</feature>
<feature type="sequence variant" id="VAR_068776" description="In EPM3; dbSNP:rs387907260." evidence="4 7">
    <original>R</original>
    <variation>W</variation>
    <location>
        <position position="94"/>
    </location>
</feature>
<feature type="sequence variant" id="VAR_068777" description="In EPM3; dbSNP:rs387907263." evidence="5 7">
    <original>L</original>
    <variation>M</variation>
    <location>
        <position position="108"/>
    </location>
</feature>
<feature type="sequence variant" id="VAR_068778" description="In EPM3; uncertain significance; dbSNP:rs387907262." evidence="7">
    <original>D</original>
    <variation>Y</variation>
    <location>
        <position position="115"/>
    </location>
</feature>
<feature type="sequence variant" id="VAR_068779" description="In EPM3; results in markedly diminished localization at the cell membrane and appearance of prominent cytoplasmic aggregates; dbSNP:rs387907246." evidence="8">
    <original>R</original>
    <variation>C</variation>
    <location>
        <position position="184"/>
    </location>
</feature>
<feature type="sequence variant" id="VAR_068780" description="In EPM3; dbSNP:rs387907261." evidence="7">
    <original>N</original>
    <variation>I</variation>
    <location>
        <position position="273"/>
    </location>
</feature>
<protein>
    <recommendedName>
        <fullName>BTB/POZ domain-containing protein KCTD7</fullName>
    </recommendedName>
</protein>
<sequence length="289" mass="33132">MVVVTGREPDSRRQDGAMSSSDAEDDFLEPATPTATQAGHALPLLPQEFPEVVPLNIGGAHFTTRLSTLRCYEDTMLAAMFSGRHYIPTDSEGRYFIDRDGTHFGDVLNFLRSGDLPPRERVRAVYKEAQYYAIGPLLEQLENMQPLKGEKVRQAFLGLMPYYKDHLERIVEIARLRAVQRKARFAKLKVCVFKEEMPITPYECPLLNSLRFERSESDGQLFEHHCEVDVSFGPWEAVADVYDLLHCLVTDLSAQGLTVDHQCIGVCDKHLVNHYYCKRPIYEFKITWW</sequence>
<reference key="1">
    <citation type="journal article" date="2004" name="Nat. Genet.">
        <title>Complete sequencing and characterization of 21,243 full-length human cDNAs.</title>
        <authorList>
            <person name="Ota T."/>
            <person name="Suzuki Y."/>
            <person name="Nishikawa T."/>
            <person name="Otsuki T."/>
            <person name="Sugiyama T."/>
            <person name="Irie R."/>
            <person name="Wakamatsu A."/>
            <person name="Hayashi K."/>
            <person name="Sato H."/>
            <person name="Nagai K."/>
            <person name="Kimura K."/>
            <person name="Makita H."/>
            <person name="Sekine M."/>
            <person name="Obayashi M."/>
            <person name="Nishi T."/>
            <person name="Shibahara T."/>
            <person name="Tanaka T."/>
            <person name="Ishii S."/>
            <person name="Yamamoto J."/>
            <person name="Saito K."/>
            <person name="Kawai Y."/>
            <person name="Isono Y."/>
            <person name="Nakamura Y."/>
            <person name="Nagahari K."/>
            <person name="Murakami K."/>
            <person name="Yasuda T."/>
            <person name="Iwayanagi T."/>
            <person name="Wagatsuma M."/>
            <person name="Shiratori A."/>
            <person name="Sudo H."/>
            <person name="Hosoiri T."/>
            <person name="Kaku Y."/>
            <person name="Kodaira H."/>
            <person name="Kondo H."/>
            <person name="Sugawara M."/>
            <person name="Takahashi M."/>
            <person name="Kanda K."/>
            <person name="Yokoi T."/>
            <person name="Furuya T."/>
            <person name="Kikkawa E."/>
            <person name="Omura Y."/>
            <person name="Abe K."/>
            <person name="Kamihara K."/>
            <person name="Katsuta N."/>
            <person name="Sato K."/>
            <person name="Tanikawa M."/>
            <person name="Yamazaki M."/>
            <person name="Ninomiya K."/>
            <person name="Ishibashi T."/>
            <person name="Yamashita H."/>
            <person name="Murakawa K."/>
            <person name="Fujimori K."/>
            <person name="Tanai H."/>
            <person name="Kimata M."/>
            <person name="Watanabe M."/>
            <person name="Hiraoka S."/>
            <person name="Chiba Y."/>
            <person name="Ishida S."/>
            <person name="Ono Y."/>
            <person name="Takiguchi S."/>
            <person name="Watanabe S."/>
            <person name="Yosida M."/>
            <person name="Hotuta T."/>
            <person name="Kusano J."/>
            <person name="Kanehori K."/>
            <person name="Takahashi-Fujii A."/>
            <person name="Hara H."/>
            <person name="Tanase T.-O."/>
            <person name="Nomura Y."/>
            <person name="Togiya S."/>
            <person name="Komai F."/>
            <person name="Hara R."/>
            <person name="Takeuchi K."/>
            <person name="Arita M."/>
            <person name="Imose N."/>
            <person name="Musashino K."/>
            <person name="Yuuki H."/>
            <person name="Oshima A."/>
            <person name="Sasaki N."/>
            <person name="Aotsuka S."/>
            <person name="Yoshikawa Y."/>
            <person name="Matsunawa H."/>
            <person name="Ichihara T."/>
            <person name="Shiohata N."/>
            <person name="Sano S."/>
            <person name="Moriya S."/>
            <person name="Momiyama H."/>
            <person name="Satoh N."/>
            <person name="Takami S."/>
            <person name="Terashima Y."/>
            <person name="Suzuki O."/>
            <person name="Nakagawa S."/>
            <person name="Senoh A."/>
            <person name="Mizoguchi H."/>
            <person name="Goto Y."/>
            <person name="Shimizu F."/>
            <person name="Wakebe H."/>
            <person name="Hishigaki H."/>
            <person name="Watanabe T."/>
            <person name="Sugiyama A."/>
            <person name="Takemoto M."/>
            <person name="Kawakami B."/>
            <person name="Yamazaki M."/>
            <person name="Watanabe K."/>
            <person name="Kumagai A."/>
            <person name="Itakura S."/>
            <person name="Fukuzumi Y."/>
            <person name="Fujimori Y."/>
            <person name="Komiyama M."/>
            <person name="Tashiro H."/>
            <person name="Tanigami A."/>
            <person name="Fujiwara T."/>
            <person name="Ono T."/>
            <person name="Yamada K."/>
            <person name="Fujii Y."/>
            <person name="Ozaki K."/>
            <person name="Hirao M."/>
            <person name="Ohmori Y."/>
            <person name="Kawabata A."/>
            <person name="Hikiji T."/>
            <person name="Kobatake N."/>
            <person name="Inagaki H."/>
            <person name="Ikema Y."/>
            <person name="Okamoto S."/>
            <person name="Okitani R."/>
            <person name="Kawakami T."/>
            <person name="Noguchi S."/>
            <person name="Itoh T."/>
            <person name="Shigeta K."/>
            <person name="Senba T."/>
            <person name="Matsumura K."/>
            <person name="Nakajima Y."/>
            <person name="Mizuno T."/>
            <person name="Morinaga M."/>
            <person name="Sasaki M."/>
            <person name="Togashi T."/>
            <person name="Oyama M."/>
            <person name="Hata H."/>
            <person name="Watanabe M."/>
            <person name="Komatsu T."/>
            <person name="Mizushima-Sugano J."/>
            <person name="Satoh T."/>
            <person name="Shirai Y."/>
            <person name="Takahashi Y."/>
            <person name="Nakagawa K."/>
            <person name="Okumura K."/>
            <person name="Nagase T."/>
            <person name="Nomura N."/>
            <person name="Kikuchi H."/>
            <person name="Masuho Y."/>
            <person name="Yamashita R."/>
            <person name="Nakai K."/>
            <person name="Yada T."/>
            <person name="Nakamura Y."/>
            <person name="Ohara O."/>
            <person name="Isogai T."/>
            <person name="Sugano S."/>
        </authorList>
    </citation>
    <scope>NUCLEOTIDE SEQUENCE [LARGE SCALE MRNA] (ISOFORM 1)</scope>
    <source>
        <tissue>Brain</tissue>
    </source>
</reference>
<reference key="2">
    <citation type="journal article" date="2003" name="Science">
        <title>Human chromosome 7: DNA sequence and biology.</title>
        <authorList>
            <person name="Scherer S.W."/>
            <person name="Cheung J."/>
            <person name="MacDonald J.R."/>
            <person name="Osborne L.R."/>
            <person name="Nakabayashi K."/>
            <person name="Herbrick J.-A."/>
            <person name="Carson A.R."/>
            <person name="Parker-Katiraee L."/>
            <person name="Skaug J."/>
            <person name="Khaja R."/>
            <person name="Zhang J."/>
            <person name="Hudek A.K."/>
            <person name="Li M."/>
            <person name="Haddad M."/>
            <person name="Duggan G.E."/>
            <person name="Fernandez B.A."/>
            <person name="Kanematsu E."/>
            <person name="Gentles S."/>
            <person name="Christopoulos C.C."/>
            <person name="Choufani S."/>
            <person name="Kwasnicka D."/>
            <person name="Zheng X.H."/>
            <person name="Lai Z."/>
            <person name="Nusskern D.R."/>
            <person name="Zhang Q."/>
            <person name="Gu Z."/>
            <person name="Lu F."/>
            <person name="Zeesman S."/>
            <person name="Nowaczyk M.J."/>
            <person name="Teshima I."/>
            <person name="Chitayat D."/>
            <person name="Shuman C."/>
            <person name="Weksberg R."/>
            <person name="Zackai E.H."/>
            <person name="Grebe T.A."/>
            <person name="Cox S.R."/>
            <person name="Kirkpatrick S.J."/>
            <person name="Rahman N."/>
            <person name="Friedman J.M."/>
            <person name="Heng H.H.Q."/>
            <person name="Pelicci P.G."/>
            <person name="Lo-Coco F."/>
            <person name="Belloni E."/>
            <person name="Shaffer L.G."/>
            <person name="Pober B."/>
            <person name="Morton C.C."/>
            <person name="Gusella J.F."/>
            <person name="Bruns G.A.P."/>
            <person name="Korf B.R."/>
            <person name="Quade B.J."/>
            <person name="Ligon A.H."/>
            <person name="Ferguson H."/>
            <person name="Higgins A.W."/>
            <person name="Leach N.T."/>
            <person name="Herrick S.R."/>
            <person name="Lemyre E."/>
            <person name="Farra C.G."/>
            <person name="Kim H.-G."/>
            <person name="Summers A.M."/>
            <person name="Gripp K.W."/>
            <person name="Roberts W."/>
            <person name="Szatmari P."/>
            <person name="Winsor E.J.T."/>
            <person name="Grzeschik K.-H."/>
            <person name="Teebi A."/>
            <person name="Minassian B.A."/>
            <person name="Kere J."/>
            <person name="Armengol L."/>
            <person name="Pujana M.A."/>
            <person name="Estivill X."/>
            <person name="Wilson M.D."/>
            <person name="Koop B.F."/>
            <person name="Tosi S."/>
            <person name="Moore G.E."/>
            <person name="Boright A.P."/>
            <person name="Zlotorynski E."/>
            <person name="Kerem B."/>
            <person name="Kroisel P.M."/>
            <person name="Petek E."/>
            <person name="Oscier D.G."/>
            <person name="Mould S.J."/>
            <person name="Doehner H."/>
            <person name="Doehner K."/>
            <person name="Rommens J.M."/>
            <person name="Vincent J.B."/>
            <person name="Venter J.C."/>
            <person name="Li P.W."/>
            <person name="Mural R.J."/>
            <person name="Adams M.D."/>
            <person name="Tsui L.-C."/>
        </authorList>
    </citation>
    <scope>NUCLEOTIDE SEQUENCE [LARGE SCALE GENOMIC DNA]</scope>
</reference>
<reference key="3">
    <citation type="submission" date="2005-07" db="EMBL/GenBank/DDBJ databases">
        <authorList>
            <person name="Mural R.J."/>
            <person name="Istrail S."/>
            <person name="Sutton G.G."/>
            <person name="Florea L."/>
            <person name="Halpern A.L."/>
            <person name="Mobarry C.M."/>
            <person name="Lippert R."/>
            <person name="Walenz B."/>
            <person name="Shatkay H."/>
            <person name="Dew I."/>
            <person name="Miller J.R."/>
            <person name="Flanigan M.J."/>
            <person name="Edwards N.J."/>
            <person name="Bolanos R."/>
            <person name="Fasulo D."/>
            <person name="Halldorsson B.V."/>
            <person name="Hannenhalli S."/>
            <person name="Turner R."/>
            <person name="Yooseph S."/>
            <person name="Lu F."/>
            <person name="Nusskern D.R."/>
            <person name="Shue B.C."/>
            <person name="Zheng X.H."/>
            <person name="Zhong F."/>
            <person name="Delcher A.L."/>
            <person name="Huson D.H."/>
            <person name="Kravitz S.A."/>
            <person name="Mouchard L."/>
            <person name="Reinert K."/>
            <person name="Remington K.A."/>
            <person name="Clark A.G."/>
            <person name="Waterman M.S."/>
            <person name="Eichler E.E."/>
            <person name="Adams M.D."/>
            <person name="Hunkapiller M.W."/>
            <person name="Myers E.W."/>
            <person name="Venter J.C."/>
        </authorList>
    </citation>
    <scope>NUCLEOTIDE SEQUENCE [LARGE SCALE GENOMIC DNA]</scope>
</reference>
<reference key="4">
    <citation type="journal article" date="2004" name="Genome Res.">
        <title>The status, quality, and expansion of the NIH full-length cDNA project: the Mammalian Gene Collection (MGC).</title>
        <authorList>
            <consortium name="The MGC Project Team"/>
        </authorList>
    </citation>
    <scope>NUCLEOTIDE SEQUENCE [LARGE SCALE MRNA] (ISOFORM 2)</scope>
    <source>
        <tissue>Brain</tissue>
    </source>
</reference>
<reference key="5">
    <citation type="journal article" date="2007" name="Ann. Neurol.">
        <title>Mutation of a potassium channel-related gene in progressive myoclonic epilepsy.</title>
        <authorList>
            <person name="Van Bogaert P."/>
            <person name="Azizieh R."/>
            <person name="Desir J."/>
            <person name="Aeby A."/>
            <person name="De Meirleir L."/>
            <person name="Laes J.-F."/>
            <person name="Christiaens F."/>
            <person name="Abramowicz M.J."/>
        </authorList>
    </citation>
    <scope>INVOLVEMENT IN EPM3</scope>
</reference>
<reference key="6">
    <citation type="journal article" date="2012" name="Am. J. Hum. Genet.">
        <title>A homozygous mutation in KCTD7 links neuronal ceroid lipofuscinosis to the ubiquitin-proteasome system.</title>
        <authorList>
            <person name="Staropoli J.F."/>
            <person name="Karaa A."/>
            <person name="Lim E.T."/>
            <person name="Kirby A."/>
            <person name="Elbalalesy N."/>
            <person name="Romansky S.G."/>
            <person name="Leydiker K.B."/>
            <person name="Coppel S.H."/>
            <person name="Barone R."/>
            <person name="Xin W."/>
            <person name="MacDonald M.E."/>
            <person name="Abdenur J.E."/>
            <person name="Daly M.J."/>
            <person name="Sims K.B."/>
            <person name="Cotman S.L."/>
        </authorList>
    </citation>
    <scope>SUBCELLULAR LOCATION</scope>
    <scope>INTERACTION WITH CUL3</scope>
    <scope>VARIANT EPM3 CYS-184</scope>
    <scope>CHARACTERIZATION OF VARIANT EPM3 CYS-184</scope>
</reference>
<reference key="7">
    <citation type="journal article" date="2012" name="J. Med. Genet.">
        <title>Novel mutations consolidate KCTD7 as a progressive myoclonus epilepsy gene.</title>
        <authorList>
            <person name="Kousi M."/>
            <person name="Anttila V."/>
            <person name="Schulz A."/>
            <person name="Calafato S."/>
            <person name="Jakkula E."/>
            <person name="Riesch E."/>
            <person name="Myllykangas L."/>
            <person name="Kalimo H."/>
            <person name="Topcu M."/>
            <person name="Gokben S."/>
            <person name="Alehan F."/>
            <person name="Lemke J.R."/>
            <person name="Alber M."/>
            <person name="Palotie A."/>
            <person name="Kopra O."/>
            <person name="Lehesjoki A.E."/>
        </authorList>
    </citation>
    <scope>SUBCELLULAR LOCATION</scope>
    <scope>VARIANTS EPM3 TRP-94; MET-108; TYR-115 AND ILE-273</scope>
</reference>
<reference key="8">
    <citation type="journal article" date="2012" name="J. Neurol.">
        <title>A compound heterozygous missense mutation and a large deletion in the KCTD7 gene presenting as an opsoclonus-myoclonus ataxia-like syndrome.</title>
        <authorList>
            <person name="Blumkin L."/>
            <person name="Kivity S."/>
            <person name="Lev D."/>
            <person name="Cohen S."/>
            <person name="Shomrat R."/>
            <person name="Lerman-Sagie T."/>
            <person name="Leshinsky-Silver E."/>
        </authorList>
    </citation>
    <scope>INVOLVEMENT IN OPSOCLONUS-MYOCLONUS ATAXIA-LIKE SYNDROME</scope>
    <scope>VARIANT TRP-84</scope>
</reference>
<reference key="9">
    <citation type="journal article" date="2012" name="Ann. Hum. Genet.">
        <title>Novel mutation in potassium channel related gene KCTD7 and progressive myoclonic epilepsy.</title>
        <authorList>
            <person name="Krabichler B."/>
            <person name="Rostasy K."/>
            <person name="Baumann M."/>
            <person name="Karall D."/>
            <person name="Scholl-Burgi S."/>
            <person name="Schwarzer C."/>
            <person name="Gautsch K."/>
            <person name="Spreiz A."/>
            <person name="Kotzot D."/>
            <person name="Zschocke J."/>
            <person name="Fauth C."/>
            <person name="Haberlandt E."/>
        </authorList>
    </citation>
    <scope>VARIANT EPM3 TRP-94</scope>
</reference>
<reference key="10">
    <citation type="journal article" date="2012" name="Epilepsia">
        <title>Targeted next generation sequencing as a diagnostic tool in epileptic disorders.</title>
        <authorList>
            <person name="Lemke J.R."/>
            <person name="Riesch E."/>
            <person name="Scheurenbrand T."/>
            <person name="Schubach M."/>
            <person name="Wilhelm C."/>
            <person name="Steiner I."/>
            <person name="Hansen J."/>
            <person name="Courage C."/>
            <person name="Gallati S."/>
            <person name="Buerki S."/>
            <person name="Strozzi S."/>
            <person name="Simonetti B.G."/>
            <person name="Grunt S."/>
            <person name="Steinlin M."/>
            <person name="Alber M."/>
            <person name="Wolff M."/>
            <person name="Klopstock T."/>
            <person name="Prott E.C."/>
            <person name="Lorenz R."/>
            <person name="Spaich C."/>
            <person name="Rona S."/>
            <person name="Lakshminarasimhan M."/>
            <person name="Kroell J."/>
            <person name="Dorn T."/>
            <person name="Kraemer G."/>
            <person name="Synofzik M."/>
            <person name="Becker F."/>
            <person name="Weber Y.G."/>
            <person name="Lerche H."/>
            <person name="Boehm D."/>
            <person name="Biskup S."/>
        </authorList>
    </citation>
    <scope>VARIANT EPM3 MET-108</scope>
</reference>
<evidence type="ECO:0000250" key="1"/>
<evidence type="ECO:0000256" key="2">
    <source>
        <dbReference type="SAM" id="MobiDB-lite"/>
    </source>
</evidence>
<evidence type="ECO:0000269" key="3">
    <source>
    </source>
</evidence>
<evidence type="ECO:0000269" key="4">
    <source>
    </source>
</evidence>
<evidence type="ECO:0000269" key="5">
    <source>
    </source>
</evidence>
<evidence type="ECO:0000269" key="6">
    <source>
    </source>
</evidence>
<evidence type="ECO:0000269" key="7">
    <source>
    </source>
</evidence>
<evidence type="ECO:0000269" key="8">
    <source>
    </source>
</evidence>
<evidence type="ECO:0000303" key="9">
    <source>
    </source>
</evidence>